<dbReference type="EMBL" id="AC006585">
    <property type="protein sequence ID" value="AAD23028.1"/>
    <property type="status" value="ALT_SEQ"/>
    <property type="molecule type" value="Genomic_DNA"/>
</dbReference>
<dbReference type="EMBL" id="CP002685">
    <property type="protein sequence ID" value="AEC07635.1"/>
    <property type="molecule type" value="Genomic_DNA"/>
</dbReference>
<dbReference type="EMBL" id="DQ056542">
    <property type="protein sequence ID" value="AAY78694.1"/>
    <property type="molecule type" value="mRNA"/>
</dbReference>
<dbReference type="EMBL" id="EU836691">
    <property type="protein sequence ID" value="ACF37253.1"/>
    <property type="status" value="ALT_INIT"/>
    <property type="molecule type" value="mRNA"/>
</dbReference>
<dbReference type="PIR" id="B84641">
    <property type="entry name" value="B84641"/>
</dbReference>
<dbReference type="RefSeq" id="NP_850058.1">
    <property type="nucleotide sequence ID" value="NM_179727.5"/>
</dbReference>
<dbReference type="SMR" id="Q4PSU4"/>
<dbReference type="BioGRID" id="2373">
    <property type="interactions" value="7"/>
</dbReference>
<dbReference type="FunCoup" id="Q4PSU4">
    <property type="interactions" value="28"/>
</dbReference>
<dbReference type="IntAct" id="Q4PSU4">
    <property type="interactions" value="12"/>
</dbReference>
<dbReference type="STRING" id="3702.Q4PSU4"/>
<dbReference type="PaxDb" id="3702-AT2G24840.1"/>
<dbReference type="EnsemblPlants" id="AT2G24840.1">
    <property type="protein sequence ID" value="AT2G24840.1"/>
    <property type="gene ID" value="AT2G24840"/>
</dbReference>
<dbReference type="GeneID" id="817021"/>
<dbReference type="Gramene" id="AT2G24840.1">
    <property type="protein sequence ID" value="AT2G24840.1"/>
    <property type="gene ID" value="AT2G24840"/>
</dbReference>
<dbReference type="KEGG" id="ath:AT2G24840"/>
<dbReference type="Araport" id="AT2G24840"/>
<dbReference type="TAIR" id="AT2G24840">
    <property type="gene designation" value="AGL61"/>
</dbReference>
<dbReference type="eggNOG" id="KOG0014">
    <property type="taxonomic scope" value="Eukaryota"/>
</dbReference>
<dbReference type="HOGENOM" id="CLU_053053_5_3_1"/>
<dbReference type="InParanoid" id="Q4PSU4"/>
<dbReference type="OMA" id="VHYDIVE"/>
<dbReference type="PhylomeDB" id="Q4PSU4"/>
<dbReference type="PRO" id="PR:Q4PSU4"/>
<dbReference type="Proteomes" id="UP000006548">
    <property type="component" value="Chromosome 2"/>
</dbReference>
<dbReference type="ExpressionAtlas" id="Q4PSU4">
    <property type="expression patterns" value="baseline and differential"/>
</dbReference>
<dbReference type="GO" id="GO:0005634">
    <property type="term" value="C:nucleus"/>
    <property type="evidence" value="ECO:0000314"/>
    <property type="project" value="TAIR"/>
</dbReference>
<dbReference type="GO" id="GO:0043078">
    <property type="term" value="C:polar nucleus"/>
    <property type="evidence" value="ECO:0000314"/>
    <property type="project" value="TAIR"/>
</dbReference>
<dbReference type="GO" id="GO:0003700">
    <property type="term" value="F:DNA-binding transcription factor activity"/>
    <property type="evidence" value="ECO:0000250"/>
    <property type="project" value="TAIR"/>
</dbReference>
<dbReference type="GO" id="GO:0046983">
    <property type="term" value="F:protein dimerization activity"/>
    <property type="evidence" value="ECO:0007669"/>
    <property type="project" value="InterPro"/>
</dbReference>
<dbReference type="GO" id="GO:0000977">
    <property type="term" value="F:RNA polymerase II transcription regulatory region sequence-specific DNA binding"/>
    <property type="evidence" value="ECO:0007669"/>
    <property type="project" value="InterPro"/>
</dbReference>
<dbReference type="GO" id="GO:0009559">
    <property type="term" value="P:embryo sac central cell differentiation"/>
    <property type="evidence" value="ECO:0000315"/>
    <property type="project" value="TAIR"/>
</dbReference>
<dbReference type="GO" id="GO:0045944">
    <property type="term" value="P:positive regulation of transcription by RNA polymerase II"/>
    <property type="evidence" value="ECO:0007669"/>
    <property type="project" value="InterPro"/>
</dbReference>
<dbReference type="CDD" id="cd00265">
    <property type="entry name" value="MADS_MEF2_like"/>
    <property type="match status" value="1"/>
</dbReference>
<dbReference type="FunFam" id="3.40.1810.10:FF:000006">
    <property type="entry name" value="Agamous-like MADS-box protein AGL62"/>
    <property type="match status" value="1"/>
</dbReference>
<dbReference type="Gene3D" id="6.10.140.920">
    <property type="match status" value="1"/>
</dbReference>
<dbReference type="Gene3D" id="3.40.1810.10">
    <property type="entry name" value="Transcription factor, MADS-box"/>
    <property type="match status" value="1"/>
</dbReference>
<dbReference type="InterPro" id="IPR033896">
    <property type="entry name" value="MEF2-like_N"/>
</dbReference>
<dbReference type="InterPro" id="IPR002100">
    <property type="entry name" value="TF_MADSbox"/>
</dbReference>
<dbReference type="InterPro" id="IPR036879">
    <property type="entry name" value="TF_MADSbox_sf"/>
</dbReference>
<dbReference type="PANTHER" id="PTHR11945:SF778">
    <property type="entry name" value="AGAMOUS-LIKE MADS-BOX PROTEIN AGL61"/>
    <property type="match status" value="1"/>
</dbReference>
<dbReference type="PANTHER" id="PTHR11945">
    <property type="entry name" value="MADS BOX PROTEIN"/>
    <property type="match status" value="1"/>
</dbReference>
<dbReference type="Pfam" id="PF00319">
    <property type="entry name" value="SRF-TF"/>
    <property type="match status" value="1"/>
</dbReference>
<dbReference type="PRINTS" id="PR00404">
    <property type="entry name" value="MADSDOMAIN"/>
</dbReference>
<dbReference type="SMART" id="SM00432">
    <property type="entry name" value="MADS"/>
    <property type="match status" value="1"/>
</dbReference>
<dbReference type="SUPFAM" id="SSF55455">
    <property type="entry name" value="SRF-like"/>
    <property type="match status" value="1"/>
</dbReference>
<dbReference type="PROSITE" id="PS50066">
    <property type="entry name" value="MADS_BOX_2"/>
    <property type="match status" value="1"/>
</dbReference>
<gene>
    <name type="primary">AGL61</name>
    <name type="synonym">DIA</name>
    <name type="ordered locus">At2g24840</name>
    <name type="ORF">F27C12.24</name>
</gene>
<comment type="function">
    <text evidence="2 3">Probable transcription factor. Controls central cell differentiation during female gametophyte development.</text>
</comment>
<comment type="subunit">
    <text evidence="2 3">Interacts with PHE1/AGL37, PHE2/AGL38, AGL80 and AGL86. Forms a heterodimer with AGL80.</text>
</comment>
<comment type="interaction">
    <interactant intactId="EBI-1237976">
        <id>Q4PSU4</id>
    </interactant>
    <interactant intactId="EBI-622424">
        <id>Q9FJK3</id>
        <label>AGL80</label>
    </interactant>
    <organismsDiffer>false</organismsDiffer>
    <experiments>4</experiments>
</comment>
<comment type="subcellular location">
    <subcellularLocation>
        <location evidence="1 2">Nucleus</location>
    </subcellularLocation>
    <text>The transport to the nucleus is dependent on dimerization with AGL80.</text>
</comment>
<comment type="tissue specificity">
    <text evidence="2 3">Expressed exclusively in the central cell of the female gametophyte and in early endosperm.</text>
</comment>
<comment type="developmental stage">
    <text evidence="3">Expressed in the final stages of embryo sac development.</text>
</comment>
<comment type="miscellaneous">
    <text>Plants lacking AGL61 show a reduced size of the central cell and a reduced or absent central cell vacuole. When fertilized, the central cell fails to give rise to endosperm and the embryo sac degenerates. However, mutated female gametophytesol are not defective in pollen tube guidance and the synergid function is not impaired.</text>
</comment>
<comment type="miscellaneous">
    <text>This protein was called 'DIANA' after the virginal Roman goddess of the hunt.</text>
</comment>
<comment type="sequence caution" evidence="4">
    <conflict type="erroneous gene model prediction">
        <sequence resource="EMBL-CDS" id="AAD23028"/>
    </conflict>
</comment>
<comment type="sequence caution" evidence="4">
    <conflict type="erroneous initiation">
        <sequence resource="EMBL-CDS" id="ACF37253"/>
    </conflict>
</comment>
<keyword id="KW-0238">DNA-binding</keyword>
<keyword id="KW-0539">Nucleus</keyword>
<keyword id="KW-1185">Reference proteome</keyword>
<keyword id="KW-0804">Transcription</keyword>
<keyword id="KW-0805">Transcription regulation</keyword>
<evidence type="ECO:0000255" key="1">
    <source>
        <dbReference type="PROSITE-ProRule" id="PRU00251"/>
    </source>
</evidence>
<evidence type="ECO:0000269" key="2">
    <source>
    </source>
</evidence>
<evidence type="ECO:0000269" key="3">
    <source>
    </source>
</evidence>
<evidence type="ECO:0000305" key="4"/>
<accession>Q4PSU4</accession>
<accession>Q9SK48</accession>
<reference key="1">
    <citation type="journal article" date="1999" name="Nature">
        <title>Sequence and analysis of chromosome 2 of the plant Arabidopsis thaliana.</title>
        <authorList>
            <person name="Lin X."/>
            <person name="Kaul S."/>
            <person name="Rounsley S.D."/>
            <person name="Shea T.P."/>
            <person name="Benito M.-I."/>
            <person name="Town C.D."/>
            <person name="Fujii C.Y."/>
            <person name="Mason T.M."/>
            <person name="Bowman C.L."/>
            <person name="Barnstead M.E."/>
            <person name="Feldblyum T.V."/>
            <person name="Buell C.R."/>
            <person name="Ketchum K.A."/>
            <person name="Lee J.J."/>
            <person name="Ronning C.M."/>
            <person name="Koo H.L."/>
            <person name="Moffat K.S."/>
            <person name="Cronin L.A."/>
            <person name="Shen M."/>
            <person name="Pai G."/>
            <person name="Van Aken S."/>
            <person name="Umayam L."/>
            <person name="Tallon L.J."/>
            <person name="Gill J.E."/>
            <person name="Adams M.D."/>
            <person name="Carrera A.J."/>
            <person name="Creasy T.H."/>
            <person name="Goodman H.M."/>
            <person name="Somerville C.R."/>
            <person name="Copenhaver G.P."/>
            <person name="Preuss D."/>
            <person name="Nierman W.C."/>
            <person name="White O."/>
            <person name="Eisen J.A."/>
            <person name="Salzberg S.L."/>
            <person name="Fraser C.M."/>
            <person name="Venter J.C."/>
        </authorList>
    </citation>
    <scope>NUCLEOTIDE SEQUENCE [LARGE SCALE GENOMIC DNA]</scope>
    <source>
        <strain>cv. Columbia</strain>
    </source>
</reference>
<reference key="2">
    <citation type="journal article" date="2017" name="Plant J.">
        <title>Araport11: a complete reannotation of the Arabidopsis thaliana reference genome.</title>
        <authorList>
            <person name="Cheng C.Y."/>
            <person name="Krishnakumar V."/>
            <person name="Chan A.P."/>
            <person name="Thibaud-Nissen F."/>
            <person name="Schobel S."/>
            <person name="Town C.D."/>
        </authorList>
    </citation>
    <scope>GENOME REANNOTATION</scope>
    <source>
        <strain>cv. Columbia</strain>
    </source>
</reference>
<reference key="3">
    <citation type="submission" date="2005-05" db="EMBL/GenBank/DDBJ databases">
        <authorList>
            <person name="Underwood B.A."/>
            <person name="Xiao Y.-L."/>
            <person name="Moskal W.A. Jr."/>
            <person name="Monaghan E.L."/>
            <person name="Wang W."/>
            <person name="Redman J.C."/>
            <person name="Wu H.C."/>
            <person name="Utterback T."/>
            <person name="Town C.D."/>
        </authorList>
    </citation>
    <scope>NUCLEOTIDE SEQUENCE [LARGE SCALE MRNA]</scope>
    <source>
        <strain>cv. Columbia</strain>
    </source>
</reference>
<reference key="4">
    <citation type="journal article" date="2008" name="Plant Physiol.">
        <title>AGL61 interacts with AGL80 and is required for central cell development in Arabidopsis.</title>
        <authorList>
            <person name="Steffen J.G."/>
            <person name="Kang I.-H."/>
            <person name="Portereiko M.F."/>
            <person name="Lloyd A."/>
            <person name="Drews G.N."/>
        </authorList>
    </citation>
    <scope>NUCLEOTIDE SEQUENCE [MRNA] OF 39-264</scope>
    <scope>FUNCTION</scope>
    <scope>SUBUNIT</scope>
    <scope>SUBCELLULAR LOCATION</scope>
    <scope>TISSUE SPECIFICITY</scope>
    <scope>INTERACTION WITH AGL80</scope>
</reference>
<reference key="5">
    <citation type="journal article" date="2008" name="Plant Cell">
        <title>The MADS domain protein DIANA acts together with AGAMOUS-LIKE80 to specify the central cell in Arabidopsis ovules.</title>
        <authorList>
            <person name="Bemer M."/>
            <person name="Wolters-Arts M."/>
            <person name="Grossniklaus U."/>
            <person name="Angenent G.C."/>
        </authorList>
    </citation>
    <scope>FUNCTION</scope>
    <scope>INTERACTION WITH AGL80; AGL86; PHE1 AND PHE2</scope>
    <scope>DEVELOPMENTAL STAGE</scope>
    <scope>TISSUE SPECIFICITY</scope>
</reference>
<organism>
    <name type="scientific">Arabidopsis thaliana</name>
    <name type="common">Mouse-ear cress</name>
    <dbReference type="NCBI Taxonomy" id="3702"/>
    <lineage>
        <taxon>Eukaryota</taxon>
        <taxon>Viridiplantae</taxon>
        <taxon>Streptophyta</taxon>
        <taxon>Embryophyta</taxon>
        <taxon>Tracheophyta</taxon>
        <taxon>Spermatophyta</taxon>
        <taxon>Magnoliopsida</taxon>
        <taxon>eudicotyledons</taxon>
        <taxon>Gunneridae</taxon>
        <taxon>Pentapetalae</taxon>
        <taxon>rosids</taxon>
        <taxon>malvids</taxon>
        <taxon>Brassicales</taxon>
        <taxon>Brassicaceae</taxon>
        <taxon>Camelineae</taxon>
        <taxon>Arabidopsis</taxon>
    </lineage>
</organism>
<sequence>MYVTKYKNKLPTLQVDLIIMPHQTQACIYKQTLSLHQIFQQRKATKTLHTKKTMMSKKKESIGRQKIPMVKIKKESHRQVTFSKRRAGLFKKASELCTLCGAEIGIIVFSPAKKPFSFGHPSVESVLDRYVSRNNMSLAQSQQLQGSPAASCELNMQLTHILSEVEEEKKKGQAMEEMRKESVRRSMINWWEKPVEEMNMVQLQEMKYALEELRKTVVTNMASFNEAKDDVFGFLDNKVTVPPYVNMPSGPSNIYNFANGNGCF</sequence>
<name>AGL61_ARATH</name>
<feature type="chain" id="PRO_0000363649" description="Agamous-like MADS-box protein AGL61">
    <location>
        <begin position="1"/>
        <end position="264"/>
    </location>
</feature>
<feature type="domain" description="MADS-box" evidence="1">
    <location>
        <begin position="62"/>
        <end position="122"/>
    </location>
</feature>
<protein>
    <recommendedName>
        <fullName>Agamous-like MADS-box protein AGL61</fullName>
    </recommendedName>
    <alternativeName>
        <fullName>Protein DIANA</fullName>
    </alternativeName>
</protein>
<proteinExistence type="evidence at protein level"/>